<sequence>MGLSMDRSPYARTGDQQRGCWYYLRYFFLFVSLIQFLIILGLVLFMIYGNVHATTESSLRATEIRADSLYSQVVGLSASQANLSKQLNISLLVKETVMQQLLTTRREMERINASFRQCQGDLITYINYNRFIAAIILSEKQCQEQLKEVNKTCEALLFKLGEKVKTLEMEVAKEKAVCSKDKESLLAGKRQTEEQLEACGKARERQQQEQQVTEENLRKVQSLCIPLDQEKFQADVLSAWRDSLIYRTLETLPYHYQLMPEYASLRRTCESLPGIMTTKIEELARGLRAGIERVTRENAELRRQKLELERAAQAAQEARARAGTEAQARETQLRAECARQTQLALEEKAALRAQRDNLERELEARKRELEQLRTEVDVRISALDTCVKAKSLPAVPPRVSGPPPNPPPIDPASLEEFKKRILESQRLPVVNPAAQPSG</sequence>
<organism>
    <name type="scientific">Mus musculus</name>
    <name type="common">Mouse</name>
    <dbReference type="NCBI Taxonomy" id="10090"/>
    <lineage>
        <taxon>Eukaryota</taxon>
        <taxon>Metazoa</taxon>
        <taxon>Chordata</taxon>
        <taxon>Craniata</taxon>
        <taxon>Vertebrata</taxon>
        <taxon>Euteleostomi</taxon>
        <taxon>Mammalia</taxon>
        <taxon>Eutheria</taxon>
        <taxon>Euarchontoglires</taxon>
        <taxon>Glires</taxon>
        <taxon>Rodentia</taxon>
        <taxon>Myomorpha</taxon>
        <taxon>Muroidea</taxon>
        <taxon>Muridae</taxon>
        <taxon>Murinae</taxon>
        <taxon>Mus</taxon>
        <taxon>Mus</taxon>
    </lineage>
</organism>
<protein>
    <recommendedName>
        <fullName>Plasmalemma vesicle-associated protein</fullName>
    </recommendedName>
    <alternativeName>
        <fullName>MECA-32 antigen</fullName>
    </alternativeName>
    <alternativeName>
        <fullName>Plasmalemma vesicle protein 1</fullName>
        <shortName>PV-1</shortName>
    </alternativeName>
</protein>
<evidence type="ECO:0000250" key="1">
    <source>
        <dbReference type="UniProtKB" id="Q9WV78"/>
    </source>
</evidence>
<evidence type="ECO:0000255" key="2"/>
<evidence type="ECO:0000256" key="3">
    <source>
        <dbReference type="SAM" id="MobiDB-lite"/>
    </source>
</evidence>
<evidence type="ECO:0000269" key="4">
    <source>
    </source>
</evidence>
<evidence type="ECO:0000269" key="5">
    <source>
    </source>
</evidence>
<evidence type="ECO:0000269" key="6">
    <source>
    </source>
</evidence>
<evidence type="ECO:0000305" key="7"/>
<evidence type="ECO:0007829" key="8">
    <source>
        <dbReference type="PDB" id="8FCF"/>
    </source>
</evidence>
<comment type="function">
    <text evidence="5">Endothelial cell-specific membrane protein involved in the formation of the diaphragms that bridge endothelial fenestrae. It is also required for the formation of stomata of caveolae and transendothelial channels. Functions in microvascular permeability, endothelial fenestrae contributing to the passage of water and solutes and regulating transcellular versus paracellular flow in different organs. Plays a specific role in embryonic development.</text>
</comment>
<comment type="subunit">
    <text evidence="1">Homodimer.</text>
</comment>
<comment type="subcellular location">
    <subcellularLocation>
        <location evidence="1">Cell membrane</location>
        <topology evidence="2">Single-pass type II membrane protein</topology>
    </subcellularLocation>
    <subcellularLocation>
        <location evidence="1">Membrane</location>
        <location evidence="1">Caveola</location>
        <topology evidence="2">Single-pass type II membrane protein</topology>
    </subcellularLocation>
    <subcellularLocation>
        <location evidence="1">Cytoplasm</location>
        <location evidence="1">Perinuclear region</location>
    </subcellularLocation>
    <text evidence="1">Membrane-associated protein of caveolae. Found in fenestral and stomatal diaphragms in fenestrated endothelia and transendothelial channels. Also colocalized with CAV1 in perinuclear region.</text>
</comment>
<comment type="tissue specificity">
    <text evidence="4 6">Expressed in lung, kidney, spleen, heart, muscle, eye, pancreas, thyroid, thymus, submaxillary gland, prostate, epididymis, uterus and liver.</text>
</comment>
<comment type="developmental stage">
    <text evidence="4 6">Expressed in embryo at 7 dpc. Expressed in the brain vasculature at 12 up to 16 dpc, whereupon it disappears.</text>
</comment>
<comment type="disruption phenotype">
    <text evidence="5">Mutant animals result in lethality during prenatal development. Examination of the homozygous deficient embryos reveal subcutaneous edema, hemorrhages and defects in the vascular wall of subcutaneous capillaries. Hearts of deficient embryos show ventricular septal defects (VSDs) and thinner ventricular walls, as well as blood abnormalities. Analyses on protein expression and localization in endothelial cells of subcutaneous capillaries and endocardium show that the protein and caveolae with stomatal diaphragm were present in wild-type embryos, whereas the diaphragm is missing in the caveolae of deficient embryos. Deficient mice are viable after birth and survive up to 4 weeks on a mixed C57BL/6N/FVB-N background. Embryos on the mixed background show edema in neck and back, but no visible hemorrhages. Postnatal mutant mice display marked reduction in body size and kinked tails compare with wild-type, but no VSDs are observed in hearts. Detailed examination of the capillaries of kidneys and pancreas reveal that the knockout mice does not form fenestrae with diaphragm.</text>
</comment>
<gene>
    <name type="primary">Plvap</name>
    <name type="synonym">Pv1</name>
</gene>
<name>PLVAP_MOUSE</name>
<reference key="1">
    <citation type="journal article" date="1995" name="Dev. Dyn.">
        <title>Novel mouse endothelial cell surface marker is suppressed during differentiation of the blood brain barrier.</title>
        <authorList>
            <person name="Hallmann R."/>
            <person name="Mayer D.N."/>
            <person name="Berg E.L."/>
            <person name="Broermann R."/>
            <person name="Butcher E.C."/>
        </authorList>
    </citation>
    <scope>NUCLEOTIDE SEQUENCE [MRNA]</scope>
    <scope>DEVELOPMENTAL STAGE</scope>
    <scope>TISSUE SPECIFICITY</scope>
    <source>
        <strain>BALB/cJ</strain>
        <tissue>Endothelial cell</tissue>
    </source>
</reference>
<reference key="2">
    <citation type="journal article" date="2001" name="Genomics">
        <title>cDNA and protein sequence, genomic organization, and analysis of cis regulatory elements of mouse and human PLVAP genes.</title>
        <authorList>
            <person name="Stan R.-V."/>
            <person name="Arden K.C."/>
            <person name="Palade G.E."/>
        </authorList>
    </citation>
    <scope>NUCLEOTIDE SEQUENCE [GENOMIC DNA / MRNA]</scope>
    <scope>DEVELOPMENTAL STAGE</scope>
    <scope>TISSUE SPECIFICITY</scope>
    <source>
        <strain>129/SvJ</strain>
        <strain>C57BL/6J</strain>
    </source>
</reference>
<reference key="3">
    <citation type="submission" date="2001-04" db="EMBL/GenBank/DDBJ databases">
        <title>Molecular cloning and expression of cDNA encoding endothelial cell marker MECA32.</title>
        <authorList>
            <person name="Mesak F.M."/>
            <person name="Krueger B."/>
            <person name="Ge A.Z."/>
            <person name="Butcher E.C."/>
            <person name="Hallmann R."/>
        </authorList>
    </citation>
    <scope>NUCLEOTIDE SEQUENCE [MRNA]</scope>
    <source>
        <strain>BALB/cJ</strain>
        <tissue>Endothelial cell</tissue>
    </source>
</reference>
<reference key="4">
    <citation type="journal article" date="2004" name="Genome Res.">
        <title>The status, quality, and expansion of the NIH full-length cDNA project: the Mammalian Gene Collection (MGC).</title>
        <authorList>
            <consortium name="The MGC Project Team"/>
        </authorList>
    </citation>
    <scope>NUCLEOTIDE SEQUENCE [LARGE SCALE MRNA]</scope>
    <source>
        <strain>FVB/N</strain>
        <tissue>Kidney</tissue>
    </source>
</reference>
<reference key="5">
    <citation type="journal article" date="2010" name="Cell">
        <title>A tissue-specific atlas of mouse protein phosphorylation and expression.</title>
        <authorList>
            <person name="Huttlin E.L."/>
            <person name="Jedrychowski M.P."/>
            <person name="Elias J.E."/>
            <person name="Goswami T."/>
            <person name="Rad R."/>
            <person name="Beausoleil S.A."/>
            <person name="Villen J."/>
            <person name="Haas W."/>
            <person name="Sowa M.E."/>
            <person name="Gygi S.P."/>
        </authorList>
    </citation>
    <scope>IDENTIFICATION BY MASS SPECTROMETRY [LARGE SCALE ANALYSIS]</scope>
    <source>
        <tissue>Heart</tissue>
        <tissue>Kidney</tissue>
        <tissue>Liver</tissue>
        <tissue>Lung</tissue>
        <tissue>Spleen</tissue>
    </source>
</reference>
<reference key="6">
    <citation type="journal article" date="2012" name="Histochem. Cell Biol.">
        <title>Lack of endothelial diaphragms in fenestrae and caveolae of mutant Plvap-deficient mice.</title>
        <authorList>
            <person name="Herrnberger L."/>
            <person name="Seitz R."/>
            <person name="Kuespert S."/>
            <person name="Boesl M.R."/>
            <person name="Fuchshofer R."/>
            <person name="Tamm E.R."/>
        </authorList>
    </citation>
    <scope>FUNCTION</scope>
    <scope>DISRUPTION PHENOTYPE</scope>
</reference>
<accession>Q91VC4</accession>
<accession>Q99JB1</accession>
<dbReference type="EMBL" id="AF369900">
    <property type="protein sequence ID" value="AAK54730.1"/>
    <property type="molecule type" value="mRNA"/>
</dbReference>
<dbReference type="EMBL" id="AF348402">
    <property type="protein sequence ID" value="AAK20902.1"/>
    <property type="molecule type" value="Genomic_DNA"/>
</dbReference>
<dbReference type="EMBL" id="AF348403">
    <property type="protein sequence ID" value="AAK20039.1"/>
    <property type="molecule type" value="mRNA"/>
</dbReference>
<dbReference type="EMBL" id="BC013517">
    <property type="protein sequence ID" value="AAH13517.1"/>
    <property type="molecule type" value="mRNA"/>
</dbReference>
<dbReference type="CCDS" id="CCDS22396.1"/>
<dbReference type="RefSeq" id="NP_115774.2">
    <property type="nucleotide sequence ID" value="NM_032398.2"/>
</dbReference>
<dbReference type="PDB" id="8FBY">
    <property type="method" value="X-ray"/>
    <property type="resolution" value="2.40 A"/>
    <property type="chains" value="A/B/C/D=141-229"/>
</dbReference>
<dbReference type="PDB" id="8FCF">
    <property type="method" value="X-ray"/>
    <property type="resolution" value="1.95 A"/>
    <property type="chains" value="C/D=141-229"/>
</dbReference>
<dbReference type="PDBsum" id="8FBY"/>
<dbReference type="PDBsum" id="8FCF"/>
<dbReference type="SMR" id="Q91VC4"/>
<dbReference type="BioGRID" id="220001">
    <property type="interactions" value="3"/>
</dbReference>
<dbReference type="FunCoup" id="Q91VC4">
    <property type="interactions" value="36"/>
</dbReference>
<dbReference type="STRING" id="10090.ENSMUSP00000035404"/>
<dbReference type="GlyCosmos" id="Q91VC4">
    <property type="glycosylation" value="4 sites, No reported glycans"/>
</dbReference>
<dbReference type="GlyGen" id="Q91VC4">
    <property type="glycosylation" value="4 sites, 1 N-linked glycan (1 site)"/>
</dbReference>
<dbReference type="iPTMnet" id="Q91VC4"/>
<dbReference type="PhosphoSitePlus" id="Q91VC4"/>
<dbReference type="SwissPalm" id="Q91VC4"/>
<dbReference type="jPOST" id="Q91VC4"/>
<dbReference type="PaxDb" id="10090-ENSMUSP00000035404"/>
<dbReference type="ProteomicsDB" id="289940"/>
<dbReference type="GeneID" id="84094"/>
<dbReference type="KEGG" id="mmu:84094"/>
<dbReference type="AGR" id="MGI:1890497"/>
<dbReference type="CTD" id="83483"/>
<dbReference type="MGI" id="MGI:1890497">
    <property type="gene designation" value="Plvap"/>
</dbReference>
<dbReference type="eggNOG" id="ENOG502S1PR">
    <property type="taxonomic scope" value="Eukaryota"/>
</dbReference>
<dbReference type="InParanoid" id="Q91VC4"/>
<dbReference type="OrthoDB" id="9944409at2759"/>
<dbReference type="PhylomeDB" id="Q91VC4"/>
<dbReference type="BioGRID-ORCS" id="84094">
    <property type="hits" value="8 hits in 80 CRISPR screens"/>
</dbReference>
<dbReference type="ChiTaRS" id="Plvap">
    <property type="organism name" value="mouse"/>
</dbReference>
<dbReference type="PRO" id="PR:Q91VC4"/>
<dbReference type="Proteomes" id="UP000000589">
    <property type="component" value="Unplaced"/>
</dbReference>
<dbReference type="RNAct" id="Q91VC4">
    <property type="molecule type" value="protein"/>
</dbReference>
<dbReference type="GO" id="GO:0005901">
    <property type="term" value="C:caveola"/>
    <property type="evidence" value="ECO:0007669"/>
    <property type="project" value="UniProtKB-SubCell"/>
</dbReference>
<dbReference type="GO" id="GO:0048471">
    <property type="term" value="C:perinuclear region of cytoplasm"/>
    <property type="evidence" value="ECO:0007669"/>
    <property type="project" value="UniProtKB-SubCell"/>
</dbReference>
<dbReference type="GO" id="GO:0032502">
    <property type="term" value="P:developmental process"/>
    <property type="evidence" value="ECO:0000315"/>
    <property type="project" value="UniProtKB"/>
</dbReference>
<dbReference type="GO" id="GO:0002693">
    <property type="term" value="P:positive regulation of cellular extravasation"/>
    <property type="evidence" value="ECO:0000315"/>
    <property type="project" value="UniProtKB"/>
</dbReference>
<dbReference type="InterPro" id="IPR009538">
    <property type="entry name" value="PV-1"/>
</dbReference>
<dbReference type="PANTHER" id="PTHR21687">
    <property type="entry name" value="PLASMALEMMA VESICLE-ASSOCIATED PROTEIN"/>
    <property type="match status" value="1"/>
</dbReference>
<dbReference type="PANTHER" id="PTHR21687:SF5">
    <property type="entry name" value="PLASMALEMMA VESICLE-ASSOCIATED PROTEIN"/>
    <property type="match status" value="1"/>
</dbReference>
<dbReference type="Pfam" id="PF06637">
    <property type="entry name" value="PV-1"/>
    <property type="match status" value="1"/>
</dbReference>
<proteinExistence type="evidence at protein level"/>
<feature type="chain" id="PRO_0000058463" description="Plasmalemma vesicle-associated protein">
    <location>
        <begin position="1"/>
        <end position="438"/>
    </location>
</feature>
<feature type="topological domain" description="Cytoplasmic" evidence="2">
    <location>
        <begin position="1"/>
        <end position="26"/>
    </location>
</feature>
<feature type="transmembrane region" description="Helical; Signal-anchor for type II membrane protein" evidence="2">
    <location>
        <begin position="27"/>
        <end position="47"/>
    </location>
</feature>
<feature type="topological domain" description="Extracellular" evidence="2">
    <location>
        <begin position="48"/>
        <end position="438"/>
    </location>
</feature>
<feature type="region of interest" description="Disordered" evidence="3">
    <location>
        <begin position="391"/>
        <end position="413"/>
    </location>
</feature>
<feature type="coiled-coil region" evidence="2">
    <location>
        <begin position="140"/>
        <end position="160"/>
    </location>
</feature>
<feature type="coiled-coil region" evidence="2">
    <location>
        <begin position="189"/>
        <end position="224"/>
    </location>
</feature>
<feature type="coiled-coil region" evidence="2">
    <location>
        <begin position="281"/>
        <end position="383"/>
    </location>
</feature>
<feature type="compositionally biased region" description="Pro residues" evidence="3">
    <location>
        <begin position="394"/>
        <end position="410"/>
    </location>
</feature>
<feature type="glycosylation site" description="N-linked (GlcNAc...) asparagine" evidence="2">
    <location>
        <position position="82"/>
    </location>
</feature>
<feature type="glycosylation site" description="N-linked (GlcNAc...) asparagine" evidence="2">
    <location>
        <position position="88"/>
    </location>
</feature>
<feature type="glycosylation site" description="N-linked (GlcNAc...) asparagine" evidence="2">
    <location>
        <position position="112"/>
    </location>
</feature>
<feature type="glycosylation site" description="N-linked (GlcNAc...) asparagine" evidence="2">
    <location>
        <position position="150"/>
    </location>
</feature>
<feature type="sequence conflict" description="In Ref. 2; AAK20902/AAK20039." evidence="7" ref="2">
    <original>T</original>
    <variation>A</variation>
    <location>
        <position position="192"/>
    </location>
</feature>
<feature type="sequence conflict" description="In Ref. 2; AAK20902/AAK20039." evidence="7" ref="2">
    <original>TT</original>
    <variation>PP</variation>
    <location>
        <begin position="277"/>
        <end position="278"/>
    </location>
</feature>
<feature type="sequence conflict" description="In Ref. 2; AAK20902/AAK20039." evidence="7" ref="2">
    <original>L</original>
    <variation>M</variation>
    <location>
        <position position="283"/>
    </location>
</feature>
<feature type="sequence conflict" description="In Ref. 2; AAK20902/AAK20039." evidence="7" ref="2">
    <original>L</original>
    <variation>V</variation>
    <location>
        <position position="287"/>
    </location>
</feature>
<feature type="sequence conflict" description="In Ref. 2; AAK20902/AAK20039." evidence="7" ref="2">
    <original>A</original>
    <variation>R</variation>
    <location>
        <position position="314"/>
    </location>
</feature>
<feature type="helix" evidence="8">
    <location>
        <begin position="143"/>
        <end position="221"/>
    </location>
</feature>
<keyword id="KW-0002">3D-structure</keyword>
<keyword id="KW-1003">Cell membrane</keyword>
<keyword id="KW-0175">Coiled coil</keyword>
<keyword id="KW-0963">Cytoplasm</keyword>
<keyword id="KW-0325">Glycoprotein</keyword>
<keyword id="KW-0472">Membrane</keyword>
<keyword id="KW-1185">Reference proteome</keyword>
<keyword id="KW-0735">Signal-anchor</keyword>
<keyword id="KW-0812">Transmembrane</keyword>
<keyword id="KW-1133">Transmembrane helix</keyword>